<dbReference type="EMBL" id="AC146520">
    <property type="status" value="NOT_ANNOTATED_CDS"/>
    <property type="molecule type" value="Genomic_DNA"/>
</dbReference>
<dbReference type="RefSeq" id="XP_012302183.2">
    <property type="nucleotide sequence ID" value="XM_012446760.3"/>
</dbReference>
<dbReference type="SMR" id="P0DKV7"/>
<dbReference type="STRING" id="37293.ENSANAP00000018917"/>
<dbReference type="GeneID" id="105713154"/>
<dbReference type="Proteomes" id="UP000233020">
    <property type="component" value="Whole Genome Shotgun Assembly"/>
</dbReference>
<dbReference type="GO" id="GO:0042627">
    <property type="term" value="C:chylomicron"/>
    <property type="evidence" value="ECO:0007669"/>
    <property type="project" value="UniProtKB-KW"/>
</dbReference>
<dbReference type="GO" id="GO:0034364">
    <property type="term" value="C:high-density lipoprotein particle"/>
    <property type="evidence" value="ECO:0007669"/>
    <property type="project" value="UniProtKB-KW"/>
</dbReference>
<dbReference type="GO" id="GO:0034362">
    <property type="term" value="C:low-density lipoprotein particle"/>
    <property type="evidence" value="ECO:0007669"/>
    <property type="project" value="UniProtKB-KW"/>
</dbReference>
<dbReference type="GO" id="GO:0034361">
    <property type="term" value="C:very-low-density lipoprotein particle"/>
    <property type="evidence" value="ECO:0007669"/>
    <property type="project" value="UniProtKB-KW"/>
</dbReference>
<dbReference type="GO" id="GO:0016004">
    <property type="term" value="F:phospholipase activator activity"/>
    <property type="evidence" value="ECO:0007669"/>
    <property type="project" value="TreeGrafter"/>
</dbReference>
<dbReference type="GO" id="GO:0043274">
    <property type="term" value="F:phospholipase binding"/>
    <property type="evidence" value="ECO:0007669"/>
    <property type="project" value="TreeGrafter"/>
</dbReference>
<dbReference type="GO" id="GO:0016042">
    <property type="term" value="P:lipid catabolic process"/>
    <property type="evidence" value="ECO:0007669"/>
    <property type="project" value="UniProtKB-KW"/>
</dbReference>
<dbReference type="GO" id="GO:0006869">
    <property type="term" value="P:lipid transport"/>
    <property type="evidence" value="ECO:0007669"/>
    <property type="project" value="UniProtKB-KW"/>
</dbReference>
<dbReference type="GO" id="GO:0060697">
    <property type="term" value="P:positive regulation of phospholipid catabolic process"/>
    <property type="evidence" value="ECO:0007669"/>
    <property type="project" value="TreeGrafter"/>
</dbReference>
<dbReference type="FunFam" id="1.10.1440.10:FF:000001">
    <property type="entry name" value="Apolipoprotein C-II"/>
    <property type="match status" value="1"/>
</dbReference>
<dbReference type="Gene3D" id="1.10.1440.10">
    <property type="entry name" value="Apolipoprotein C-II"/>
    <property type="match status" value="1"/>
</dbReference>
<dbReference type="InterPro" id="IPR008019">
    <property type="entry name" value="Apo-CII"/>
</dbReference>
<dbReference type="InterPro" id="IPR023121">
    <property type="entry name" value="ApoC-II_dom_sf"/>
</dbReference>
<dbReference type="PANTHER" id="PTHR16566">
    <property type="entry name" value="APOLIPOPROTEIN C-II"/>
    <property type="match status" value="1"/>
</dbReference>
<dbReference type="PANTHER" id="PTHR16566:SF0">
    <property type="entry name" value="APOLIPOPROTEIN C-II"/>
    <property type="match status" value="1"/>
</dbReference>
<dbReference type="Pfam" id="PF05355">
    <property type="entry name" value="Apo-CII"/>
    <property type="match status" value="1"/>
</dbReference>
<name>APOC2_AOTNA</name>
<organism>
    <name type="scientific">Aotus nancymaae</name>
    <name type="common">Ma's night monkey</name>
    <dbReference type="NCBI Taxonomy" id="37293"/>
    <lineage>
        <taxon>Eukaryota</taxon>
        <taxon>Metazoa</taxon>
        <taxon>Chordata</taxon>
        <taxon>Craniata</taxon>
        <taxon>Vertebrata</taxon>
        <taxon>Euteleostomi</taxon>
        <taxon>Mammalia</taxon>
        <taxon>Eutheria</taxon>
        <taxon>Euarchontoglires</taxon>
        <taxon>Primates</taxon>
        <taxon>Haplorrhini</taxon>
        <taxon>Platyrrhini</taxon>
        <taxon>Aotidae</taxon>
        <taxon>Aotus</taxon>
    </lineage>
</organism>
<protein>
    <recommendedName>
        <fullName>Apolipoprotein C-II</fullName>
        <shortName>Apo-CII</shortName>
        <shortName>ApoC-II</shortName>
    </recommendedName>
    <alternativeName>
        <fullName>Apolipoprotein C2</fullName>
    </alternativeName>
    <component>
        <recommendedName>
            <fullName>Proapolipoprotein C-II</fullName>
            <shortName>ProapoC-II</shortName>
        </recommendedName>
    </component>
</protein>
<sequence length="101" mass="11154">MGTRFLLALFLVLLVLGFEVQGAHLPQQEESASPALLTQMQESLSSYWDSAKAAASKLYQKTYLPTVDEKLRDMYSKSTAAMSTYAGILTDQVLSMLKGEE</sequence>
<feature type="signal peptide" evidence="2">
    <location>
        <begin position="1"/>
        <end position="22"/>
    </location>
</feature>
<feature type="chain" id="PRO_0000420984" description="Proapolipoprotein C-II">
    <location>
        <begin position="23"/>
        <end position="101"/>
    </location>
</feature>
<feature type="chain" id="PRO_0000430834" description="Apolipoprotein C-II" evidence="1">
    <location>
        <begin position="29"/>
        <end position="101"/>
    </location>
</feature>
<feature type="region of interest" description="Lipid binding" evidence="1">
    <location>
        <begin position="66"/>
        <end position="74"/>
    </location>
</feature>
<feature type="region of interest" description="Lipoprotein lipase cofactor" evidence="1">
    <location>
        <begin position="78"/>
        <end position="101"/>
    </location>
</feature>
<comment type="function">
    <text evidence="1">Component of chylomicrons, very low-density lipoproteins (VLDL), low-density lipoproteins (LDL), and high-density lipoproteins (HDL) in plasma. Plays an important role in lipoprotein metabolism as an activator of lipoprotein lipase. Both proapolipoprotein C-II and apolipoprotein C-II can activate lipoprotein lipase.</text>
</comment>
<comment type="subcellular location">
    <subcellularLocation>
        <location evidence="1">Secreted</location>
    </subcellularLocation>
</comment>
<comment type="PTM">
    <text evidence="1">Proapolipoprotein C-II is synthesized as a sialic acid containing glycoprotein which is subsequently desialylated prior to its proteolytic processing.</text>
</comment>
<comment type="PTM">
    <text evidence="1">Proapolipoprotein C-II, the major form found in plasma undergoes proteolytic cleavage of its N-terminal hexapeptide to generate apolipoprotein C-II, which occurs as the minor form in plasma.</text>
</comment>
<comment type="similarity">
    <text evidence="3">Belongs to the apolipoprotein C2 family.</text>
</comment>
<reference key="1">
    <citation type="submission" date="2006-07" db="EMBL/GenBank/DDBJ databases">
        <authorList>
            <person name="Cheng J.-F."/>
            <person name="Hamilton M."/>
            <person name="Peng Y."/>
            <person name="Hosseini R."/>
            <person name="Peng Z."/>
            <person name="Malinov I."/>
            <person name="Rubin E.M."/>
        </authorList>
    </citation>
    <scope>NUCLEOTIDE SEQUENCE [LARGE SCALE GENOMIC DNA]</scope>
</reference>
<reference key="2">
    <citation type="unpublished observations" date="2012-11">
        <authorList>
            <person name="Puppione D.L."/>
        </authorList>
    </citation>
    <scope>IDENTIFICATION</scope>
</reference>
<accession>P0DKV7</accession>
<keyword id="KW-0162">Chylomicron</keyword>
<keyword id="KW-0325">Glycoprotein</keyword>
<keyword id="KW-0345">HDL</keyword>
<keyword id="KW-0427">LDL</keyword>
<keyword id="KW-0442">Lipid degradation</keyword>
<keyword id="KW-0443">Lipid metabolism</keyword>
<keyword id="KW-0445">Lipid transport</keyword>
<keyword id="KW-1185">Reference proteome</keyword>
<keyword id="KW-0964">Secreted</keyword>
<keyword id="KW-0730">Sialic acid</keyword>
<keyword id="KW-0732">Signal</keyword>
<keyword id="KW-0813">Transport</keyword>
<keyword id="KW-0850">VLDL</keyword>
<evidence type="ECO:0000250" key="1">
    <source>
        <dbReference type="UniProtKB" id="P02655"/>
    </source>
</evidence>
<evidence type="ECO:0000255" key="2"/>
<evidence type="ECO:0000305" key="3"/>
<gene>
    <name type="primary">APOC2</name>
</gene>
<proteinExistence type="inferred from homology"/>